<feature type="chain" id="PRO_1000128182" description="Small ribosomal subunit protein uS9">
    <location>
        <begin position="1"/>
        <end position="130"/>
    </location>
</feature>
<feature type="region of interest" description="Disordered" evidence="2">
    <location>
        <begin position="106"/>
        <end position="130"/>
    </location>
</feature>
<feature type="compositionally biased region" description="Basic residues" evidence="2">
    <location>
        <begin position="111"/>
        <end position="130"/>
    </location>
</feature>
<name>RS9_STRPI</name>
<proteinExistence type="inferred from homology"/>
<protein>
    <recommendedName>
        <fullName evidence="1">Small ribosomal subunit protein uS9</fullName>
    </recommendedName>
    <alternativeName>
        <fullName evidence="3">30S ribosomal protein S9</fullName>
    </alternativeName>
</protein>
<comment type="similarity">
    <text evidence="1">Belongs to the universal ribosomal protein uS9 family.</text>
</comment>
<reference key="1">
    <citation type="journal article" date="2010" name="Genome Biol.">
        <title>Structure and dynamics of the pan-genome of Streptococcus pneumoniae and closely related species.</title>
        <authorList>
            <person name="Donati C."/>
            <person name="Hiller N.L."/>
            <person name="Tettelin H."/>
            <person name="Muzzi A."/>
            <person name="Croucher N.J."/>
            <person name="Angiuoli S.V."/>
            <person name="Oggioni M."/>
            <person name="Dunning Hotopp J.C."/>
            <person name="Hu F.Z."/>
            <person name="Riley D.R."/>
            <person name="Covacci A."/>
            <person name="Mitchell T.J."/>
            <person name="Bentley S.D."/>
            <person name="Kilian M."/>
            <person name="Ehrlich G.D."/>
            <person name="Rappuoli R."/>
            <person name="Moxon E.R."/>
            <person name="Masignani V."/>
        </authorList>
    </citation>
    <scope>NUCLEOTIDE SEQUENCE [LARGE SCALE GENOMIC DNA]</scope>
    <source>
        <strain>Hungary19A-6</strain>
    </source>
</reference>
<keyword id="KW-0687">Ribonucleoprotein</keyword>
<keyword id="KW-0689">Ribosomal protein</keyword>
<accession>B1I922</accession>
<dbReference type="EMBL" id="CP000936">
    <property type="protein sequence ID" value="ACA37290.1"/>
    <property type="molecule type" value="Genomic_DNA"/>
</dbReference>
<dbReference type="RefSeq" id="WP_000075973.1">
    <property type="nucleotide sequence ID" value="NC_010380.1"/>
</dbReference>
<dbReference type="SMR" id="B1I922"/>
<dbReference type="GeneID" id="93922492"/>
<dbReference type="KEGG" id="spv:SPH_0412"/>
<dbReference type="HOGENOM" id="CLU_046483_2_1_9"/>
<dbReference type="Proteomes" id="UP000002163">
    <property type="component" value="Chromosome"/>
</dbReference>
<dbReference type="GO" id="GO:0022627">
    <property type="term" value="C:cytosolic small ribosomal subunit"/>
    <property type="evidence" value="ECO:0007669"/>
    <property type="project" value="TreeGrafter"/>
</dbReference>
<dbReference type="GO" id="GO:0003723">
    <property type="term" value="F:RNA binding"/>
    <property type="evidence" value="ECO:0007669"/>
    <property type="project" value="TreeGrafter"/>
</dbReference>
<dbReference type="GO" id="GO:0003735">
    <property type="term" value="F:structural constituent of ribosome"/>
    <property type="evidence" value="ECO:0007669"/>
    <property type="project" value="InterPro"/>
</dbReference>
<dbReference type="GO" id="GO:0006412">
    <property type="term" value="P:translation"/>
    <property type="evidence" value="ECO:0007669"/>
    <property type="project" value="UniProtKB-UniRule"/>
</dbReference>
<dbReference type="FunFam" id="3.30.230.10:FF:000001">
    <property type="entry name" value="30S ribosomal protein S9"/>
    <property type="match status" value="1"/>
</dbReference>
<dbReference type="Gene3D" id="3.30.230.10">
    <property type="match status" value="1"/>
</dbReference>
<dbReference type="HAMAP" id="MF_00532_B">
    <property type="entry name" value="Ribosomal_uS9_B"/>
    <property type="match status" value="1"/>
</dbReference>
<dbReference type="InterPro" id="IPR020568">
    <property type="entry name" value="Ribosomal_Su5_D2-typ_SF"/>
</dbReference>
<dbReference type="InterPro" id="IPR000754">
    <property type="entry name" value="Ribosomal_uS9"/>
</dbReference>
<dbReference type="InterPro" id="IPR023035">
    <property type="entry name" value="Ribosomal_uS9_bac/plastid"/>
</dbReference>
<dbReference type="InterPro" id="IPR020574">
    <property type="entry name" value="Ribosomal_uS9_CS"/>
</dbReference>
<dbReference type="InterPro" id="IPR014721">
    <property type="entry name" value="Ribsml_uS5_D2-typ_fold_subgr"/>
</dbReference>
<dbReference type="NCBIfam" id="NF001099">
    <property type="entry name" value="PRK00132.1"/>
    <property type="match status" value="1"/>
</dbReference>
<dbReference type="PANTHER" id="PTHR21569">
    <property type="entry name" value="RIBOSOMAL PROTEIN S9"/>
    <property type="match status" value="1"/>
</dbReference>
<dbReference type="PANTHER" id="PTHR21569:SF1">
    <property type="entry name" value="SMALL RIBOSOMAL SUBUNIT PROTEIN US9M"/>
    <property type="match status" value="1"/>
</dbReference>
<dbReference type="Pfam" id="PF00380">
    <property type="entry name" value="Ribosomal_S9"/>
    <property type="match status" value="1"/>
</dbReference>
<dbReference type="SUPFAM" id="SSF54211">
    <property type="entry name" value="Ribosomal protein S5 domain 2-like"/>
    <property type="match status" value="1"/>
</dbReference>
<dbReference type="PROSITE" id="PS00360">
    <property type="entry name" value="RIBOSOMAL_S9"/>
    <property type="match status" value="1"/>
</dbReference>
<organism>
    <name type="scientific">Streptococcus pneumoniae (strain Hungary19A-6)</name>
    <dbReference type="NCBI Taxonomy" id="487214"/>
    <lineage>
        <taxon>Bacteria</taxon>
        <taxon>Bacillati</taxon>
        <taxon>Bacillota</taxon>
        <taxon>Bacilli</taxon>
        <taxon>Lactobacillales</taxon>
        <taxon>Streptococcaceae</taxon>
        <taxon>Streptococcus</taxon>
    </lineage>
</organism>
<sequence>MSQAQYAGTGRRKNAVARVRLVPGTGKITVNKKDVEEYIPHADLRLVINQPFAVTSTVGSYDVFVNVVGGGYAGQSGAIRHGIARALLQVDPDFRDSLKRAGLLTRDSRKVERKKPGLKKARKASQFSKR</sequence>
<evidence type="ECO:0000255" key="1">
    <source>
        <dbReference type="HAMAP-Rule" id="MF_00532"/>
    </source>
</evidence>
<evidence type="ECO:0000256" key="2">
    <source>
        <dbReference type="SAM" id="MobiDB-lite"/>
    </source>
</evidence>
<evidence type="ECO:0000305" key="3"/>
<gene>
    <name evidence="1" type="primary">rpsI</name>
    <name type="ordered locus">SPH_0412</name>
</gene>